<reference key="1">
    <citation type="journal article" date="2009" name="J. Bacteriol.">
        <title>Complete genome sequence of Haemophilus parasuis SH0165.</title>
        <authorList>
            <person name="Yue M."/>
            <person name="Yang F."/>
            <person name="Yang J."/>
            <person name="Bei W."/>
            <person name="Cai X."/>
            <person name="Chen L."/>
            <person name="Dong J."/>
            <person name="Zhou R."/>
            <person name="Jin M."/>
            <person name="Jin Q."/>
            <person name="Chen H."/>
        </authorList>
    </citation>
    <scope>NUCLEOTIDE SEQUENCE [LARGE SCALE GENOMIC DNA]</scope>
    <source>
        <strain>SH0165</strain>
    </source>
</reference>
<organism>
    <name type="scientific">Glaesserella parasuis serovar 5 (strain SH0165)</name>
    <name type="common">Haemophilus parasuis</name>
    <dbReference type="NCBI Taxonomy" id="557723"/>
    <lineage>
        <taxon>Bacteria</taxon>
        <taxon>Pseudomonadati</taxon>
        <taxon>Pseudomonadota</taxon>
        <taxon>Gammaproteobacteria</taxon>
        <taxon>Pasteurellales</taxon>
        <taxon>Pasteurellaceae</taxon>
        <taxon>Glaesserella</taxon>
    </lineage>
</organism>
<evidence type="ECO:0000255" key="1">
    <source>
        <dbReference type="HAMAP-Rule" id="MF_01661"/>
    </source>
</evidence>
<comment type="function">
    <text evidence="1">Catalyzes the interconversion of beta-pyran and beta-furan forms of D-ribose.</text>
</comment>
<comment type="catalytic activity">
    <reaction evidence="1">
        <text>beta-D-ribopyranose = beta-D-ribofuranose</text>
        <dbReference type="Rhea" id="RHEA:25432"/>
        <dbReference type="ChEBI" id="CHEBI:27476"/>
        <dbReference type="ChEBI" id="CHEBI:47002"/>
        <dbReference type="EC" id="5.4.99.62"/>
    </reaction>
</comment>
<comment type="pathway">
    <text evidence="1">Carbohydrate metabolism; D-ribose degradation; D-ribose 5-phosphate from beta-D-ribopyranose: step 1/2.</text>
</comment>
<comment type="subunit">
    <text evidence="1">Homodecamer.</text>
</comment>
<comment type="subcellular location">
    <subcellularLocation>
        <location evidence="1">Cytoplasm</location>
    </subcellularLocation>
</comment>
<comment type="similarity">
    <text evidence="1">Belongs to the RbsD / FucU family. RbsD subfamily.</text>
</comment>
<keyword id="KW-0119">Carbohydrate metabolism</keyword>
<keyword id="KW-0963">Cytoplasm</keyword>
<keyword id="KW-0413">Isomerase</keyword>
<keyword id="KW-1185">Reference proteome</keyword>
<name>RBSD_GLAP5</name>
<gene>
    <name evidence="1" type="primary">rbsD</name>
    <name type="ordered locus">HAPS_1629</name>
</gene>
<proteinExistence type="inferred from homology"/>
<dbReference type="EC" id="5.4.99.62" evidence="1"/>
<dbReference type="EMBL" id="CP001321">
    <property type="protein sequence ID" value="ACL33179.1"/>
    <property type="molecule type" value="Genomic_DNA"/>
</dbReference>
<dbReference type="RefSeq" id="WP_005713620.1">
    <property type="nucleotide sequence ID" value="NC_011852.1"/>
</dbReference>
<dbReference type="SMR" id="B8F777"/>
<dbReference type="STRING" id="557723.HAPS_1629"/>
<dbReference type="GeneID" id="66619863"/>
<dbReference type="KEGG" id="hap:HAPS_1629"/>
<dbReference type="HOGENOM" id="CLU_135498_0_0_6"/>
<dbReference type="UniPathway" id="UPA00916">
    <property type="reaction ID" value="UER00888"/>
</dbReference>
<dbReference type="Proteomes" id="UP000006743">
    <property type="component" value="Chromosome"/>
</dbReference>
<dbReference type="GO" id="GO:0005829">
    <property type="term" value="C:cytosol"/>
    <property type="evidence" value="ECO:0007669"/>
    <property type="project" value="TreeGrafter"/>
</dbReference>
<dbReference type="GO" id="GO:0062193">
    <property type="term" value="F:D-ribose pyranase activity"/>
    <property type="evidence" value="ECO:0007669"/>
    <property type="project" value="UniProtKB-EC"/>
</dbReference>
<dbReference type="GO" id="GO:0016872">
    <property type="term" value="F:intramolecular lyase activity"/>
    <property type="evidence" value="ECO:0007669"/>
    <property type="project" value="UniProtKB-UniRule"/>
</dbReference>
<dbReference type="GO" id="GO:0048029">
    <property type="term" value="F:monosaccharide binding"/>
    <property type="evidence" value="ECO:0007669"/>
    <property type="project" value="InterPro"/>
</dbReference>
<dbReference type="GO" id="GO:0019303">
    <property type="term" value="P:D-ribose catabolic process"/>
    <property type="evidence" value="ECO:0007669"/>
    <property type="project" value="UniProtKB-UniRule"/>
</dbReference>
<dbReference type="Gene3D" id="3.40.1650.10">
    <property type="entry name" value="RbsD-like domain"/>
    <property type="match status" value="1"/>
</dbReference>
<dbReference type="HAMAP" id="MF_01661">
    <property type="entry name" value="D_rib_pyranase"/>
    <property type="match status" value="1"/>
</dbReference>
<dbReference type="InterPro" id="IPR023064">
    <property type="entry name" value="D-ribose_pyranase"/>
</dbReference>
<dbReference type="InterPro" id="IPR023750">
    <property type="entry name" value="RbsD-like_sf"/>
</dbReference>
<dbReference type="InterPro" id="IPR007721">
    <property type="entry name" value="RbsD_FucU"/>
</dbReference>
<dbReference type="NCBIfam" id="NF008761">
    <property type="entry name" value="PRK11797.1"/>
    <property type="match status" value="1"/>
</dbReference>
<dbReference type="PANTHER" id="PTHR37831">
    <property type="entry name" value="D-RIBOSE PYRANASE"/>
    <property type="match status" value="1"/>
</dbReference>
<dbReference type="PANTHER" id="PTHR37831:SF1">
    <property type="entry name" value="D-RIBOSE PYRANASE"/>
    <property type="match status" value="1"/>
</dbReference>
<dbReference type="Pfam" id="PF05025">
    <property type="entry name" value="RbsD_FucU"/>
    <property type="match status" value="1"/>
</dbReference>
<dbReference type="SUPFAM" id="SSF102546">
    <property type="entry name" value="RbsD-like"/>
    <property type="match status" value="1"/>
</dbReference>
<sequence>MKKTTILNAQLSHVIATMGHTDGLTICDAGLPIPTEQHCIDLALTKGIPDFLSVLQAVSSELFIEKIVLAEEIKNINPQIEQQLLMVIQQIEVQQKNTIKIEYIPHNEFKHQSNQAKAVVRTGECSPYANVILYSGVPF</sequence>
<accession>B8F777</accession>
<protein>
    <recommendedName>
        <fullName evidence="1">D-ribose pyranase</fullName>
        <ecNumber evidence="1">5.4.99.62</ecNumber>
    </recommendedName>
</protein>
<feature type="chain" id="PRO_1000187150" description="D-ribose pyranase">
    <location>
        <begin position="1"/>
        <end position="139"/>
    </location>
</feature>
<feature type="active site" description="Proton donor" evidence="1">
    <location>
        <position position="20"/>
    </location>
</feature>
<feature type="binding site" evidence="1">
    <location>
        <position position="28"/>
    </location>
    <ligand>
        <name>substrate</name>
    </ligand>
</feature>
<feature type="binding site" evidence="1">
    <location>
        <position position="106"/>
    </location>
    <ligand>
        <name>substrate</name>
    </ligand>
</feature>
<feature type="binding site" evidence="1">
    <location>
        <begin position="128"/>
        <end position="130"/>
    </location>
    <ligand>
        <name>substrate</name>
    </ligand>
</feature>